<name>RNZ_HALSA</name>
<protein>
    <recommendedName>
        <fullName evidence="1">Ribonuclease Z</fullName>
        <shortName evidence="1">RNase Z</shortName>
        <ecNumber evidence="1">3.1.26.11</ecNumber>
    </recommendedName>
    <alternativeName>
        <fullName evidence="1">tRNA 3 endonuclease</fullName>
    </alternativeName>
    <alternativeName>
        <fullName evidence="1">tRNase Z</fullName>
    </alternativeName>
</protein>
<feature type="chain" id="PRO_0000155922" description="Ribonuclease Z">
    <location>
        <begin position="1"/>
        <end position="308"/>
    </location>
</feature>
<feature type="active site" description="Proton acceptor" evidence="1">
    <location>
        <position position="65"/>
    </location>
</feature>
<feature type="binding site" evidence="1">
    <location>
        <position position="61"/>
    </location>
    <ligand>
        <name>Zn(2+)</name>
        <dbReference type="ChEBI" id="CHEBI:29105"/>
        <label>1</label>
        <note>catalytic</note>
    </ligand>
</feature>
<feature type="binding site" evidence="1">
    <location>
        <position position="63"/>
    </location>
    <ligand>
        <name>Zn(2+)</name>
        <dbReference type="ChEBI" id="CHEBI:29105"/>
        <label>1</label>
        <note>catalytic</note>
    </ligand>
</feature>
<feature type="binding site" evidence="1">
    <location>
        <position position="65"/>
    </location>
    <ligand>
        <name>Zn(2+)</name>
        <dbReference type="ChEBI" id="CHEBI:29105"/>
        <label>2</label>
        <note>catalytic</note>
    </ligand>
</feature>
<feature type="binding site" evidence="1">
    <location>
        <position position="66"/>
    </location>
    <ligand>
        <name>Zn(2+)</name>
        <dbReference type="ChEBI" id="CHEBI:29105"/>
        <label>2</label>
        <note>catalytic</note>
    </ligand>
</feature>
<feature type="binding site" evidence="1">
    <location>
        <position position="139"/>
    </location>
    <ligand>
        <name>Zn(2+)</name>
        <dbReference type="ChEBI" id="CHEBI:29105"/>
        <label>1</label>
        <note>catalytic</note>
    </ligand>
</feature>
<feature type="binding site" evidence="1">
    <location>
        <position position="210"/>
    </location>
    <ligand>
        <name>Zn(2+)</name>
        <dbReference type="ChEBI" id="CHEBI:29105"/>
        <label>1</label>
        <note>catalytic</note>
    </ligand>
</feature>
<feature type="binding site" evidence="1">
    <location>
        <position position="210"/>
    </location>
    <ligand>
        <name>Zn(2+)</name>
        <dbReference type="ChEBI" id="CHEBI:29105"/>
        <label>2</label>
        <note>catalytic</note>
    </ligand>
</feature>
<feature type="binding site" evidence="1">
    <location>
        <position position="268"/>
    </location>
    <ligand>
        <name>Zn(2+)</name>
        <dbReference type="ChEBI" id="CHEBI:29105"/>
        <label>2</label>
        <note>catalytic</note>
    </ligand>
</feature>
<reference key="1">
    <citation type="journal article" date="2000" name="Proc. Natl. Acad. Sci. U.S.A.">
        <title>Genome sequence of Halobacterium species NRC-1.</title>
        <authorList>
            <person name="Ng W.V."/>
            <person name="Kennedy S.P."/>
            <person name="Mahairas G.G."/>
            <person name="Berquist B."/>
            <person name="Pan M."/>
            <person name="Shukla H.D."/>
            <person name="Lasky S.R."/>
            <person name="Baliga N.S."/>
            <person name="Thorsson V."/>
            <person name="Sbrogna J."/>
            <person name="Swartzell S."/>
            <person name="Weir D."/>
            <person name="Hall J."/>
            <person name="Dahl T.A."/>
            <person name="Welti R."/>
            <person name="Goo Y.A."/>
            <person name="Leithauser B."/>
            <person name="Keller K."/>
            <person name="Cruz R."/>
            <person name="Danson M.J."/>
            <person name="Hough D.W."/>
            <person name="Maddocks D.G."/>
            <person name="Jablonski P.E."/>
            <person name="Krebs M.P."/>
            <person name="Angevine C.M."/>
            <person name="Dale H."/>
            <person name="Isenbarger T.A."/>
            <person name="Peck R.F."/>
            <person name="Pohlschroder M."/>
            <person name="Spudich J.L."/>
            <person name="Jung K.-H."/>
            <person name="Alam M."/>
            <person name="Freitas T."/>
            <person name="Hou S."/>
            <person name="Daniels C.J."/>
            <person name="Dennis P.P."/>
            <person name="Omer A.D."/>
            <person name="Ebhardt H."/>
            <person name="Lowe T.M."/>
            <person name="Liang P."/>
            <person name="Riley M."/>
            <person name="Hood L."/>
            <person name="DasSarma S."/>
        </authorList>
    </citation>
    <scope>NUCLEOTIDE SEQUENCE [LARGE SCALE GENOMIC DNA]</scope>
    <source>
        <strain>ATCC 700922 / JCM 11081 / NRC-1</strain>
    </source>
</reference>
<evidence type="ECO:0000255" key="1">
    <source>
        <dbReference type="HAMAP-Rule" id="MF_01818"/>
    </source>
</evidence>
<proteinExistence type="inferred from homology"/>
<gene>
    <name evidence="1" type="primary">rnz</name>
    <name type="ordered locus">VNG_2239C</name>
</gene>
<comment type="function">
    <text evidence="1">Zinc phosphodiesterase, which displays some tRNA 3'-processing endonuclease activity. Probably involved in tRNA maturation, by removing a 3'-trailer from precursor tRNA.</text>
</comment>
<comment type="catalytic activity">
    <reaction evidence="1">
        <text>Endonucleolytic cleavage of RNA, removing extra 3' nucleotides from tRNA precursor, generating 3' termini of tRNAs. A 3'-hydroxy group is left at the tRNA terminus and a 5'-phosphoryl group is left at the trailer molecule.</text>
        <dbReference type="EC" id="3.1.26.11"/>
    </reaction>
</comment>
<comment type="cofactor">
    <cofactor evidence="1">
        <name>Zn(2+)</name>
        <dbReference type="ChEBI" id="CHEBI:29105"/>
    </cofactor>
    <text evidence="1">Binds 2 Zn(2+) ions.</text>
</comment>
<comment type="subunit">
    <text evidence="1">Homodimer.</text>
</comment>
<comment type="similarity">
    <text evidence="1">Belongs to the RNase Z family.</text>
</comment>
<accession>Q9HN60</accession>
<organism>
    <name type="scientific">Halobacterium salinarum (strain ATCC 700922 / JCM 11081 / NRC-1)</name>
    <name type="common">Halobacterium halobium</name>
    <dbReference type="NCBI Taxonomy" id="64091"/>
    <lineage>
        <taxon>Archaea</taxon>
        <taxon>Methanobacteriati</taxon>
        <taxon>Methanobacteriota</taxon>
        <taxon>Stenosarchaea group</taxon>
        <taxon>Halobacteria</taxon>
        <taxon>Halobacteriales</taxon>
        <taxon>Halobacteriaceae</taxon>
        <taxon>Halobacterium</taxon>
        <taxon>Halobacterium salinarum NRC-34001</taxon>
    </lineage>
</organism>
<sequence length="308" mass="32672">MTLEVTFLGTSGAVPTTERNPSSVFVRRNGDAFLFDAGEATQRQMMRYKTGFGVSDVFITHGHGDHVFGLPGLVHTWDFNDRTDPLTIHVPRGLRGDIEDLVFSAGGDVGYPVRITEATPGAVVRSHDDYEVRAFETAHSTASVGYALVEDDRTGRFDRARAEELGVPVGPKFSTLHDGQPVELDDGTVVSPEQVVGDPRPGRTLVYTGDTRPHDPVVSAAEDADLLIHDATFANDASERAAETGHSTAGEAADVATEAGAKALALTHVSSRYAGDASEISAGASGFDGEAFVAHDGLTHEIPFPDAD</sequence>
<keyword id="KW-0255">Endonuclease</keyword>
<keyword id="KW-0378">Hydrolase</keyword>
<keyword id="KW-0479">Metal-binding</keyword>
<keyword id="KW-0540">Nuclease</keyword>
<keyword id="KW-1185">Reference proteome</keyword>
<keyword id="KW-0819">tRNA processing</keyword>
<keyword id="KW-0862">Zinc</keyword>
<dbReference type="EC" id="3.1.26.11" evidence="1"/>
<dbReference type="EMBL" id="AE004437">
    <property type="protein sequence ID" value="AAG20361.1"/>
    <property type="molecule type" value="Genomic_DNA"/>
</dbReference>
<dbReference type="PIR" id="E84374">
    <property type="entry name" value="E84374"/>
</dbReference>
<dbReference type="RefSeq" id="WP_010903662.1">
    <property type="nucleotide sequence ID" value="NC_002607.1"/>
</dbReference>
<dbReference type="SMR" id="Q9HN60"/>
<dbReference type="FunCoup" id="Q9HN60">
    <property type="interactions" value="112"/>
</dbReference>
<dbReference type="STRING" id="64091.VNG_2239C"/>
<dbReference type="PaxDb" id="64091-VNG_2239C"/>
<dbReference type="GeneID" id="68694792"/>
<dbReference type="KEGG" id="hal:VNG_2239C"/>
<dbReference type="PATRIC" id="fig|64091.14.peg.1721"/>
<dbReference type="HOGENOM" id="CLU_031317_2_1_2"/>
<dbReference type="InParanoid" id="Q9HN60"/>
<dbReference type="OrthoDB" id="85118at2157"/>
<dbReference type="PhylomeDB" id="Q9HN60"/>
<dbReference type="Proteomes" id="UP000000554">
    <property type="component" value="Chromosome"/>
</dbReference>
<dbReference type="GO" id="GO:0042781">
    <property type="term" value="F:3'-tRNA processing endoribonuclease activity"/>
    <property type="evidence" value="ECO:0000318"/>
    <property type="project" value="GO_Central"/>
</dbReference>
<dbReference type="GO" id="GO:0008270">
    <property type="term" value="F:zinc ion binding"/>
    <property type="evidence" value="ECO:0007669"/>
    <property type="project" value="UniProtKB-UniRule"/>
</dbReference>
<dbReference type="CDD" id="cd07717">
    <property type="entry name" value="RNaseZ_ZiPD-like_MBL-fold"/>
    <property type="match status" value="1"/>
</dbReference>
<dbReference type="FunFam" id="3.60.15.10:FF:000002">
    <property type="entry name" value="Ribonuclease Z"/>
    <property type="match status" value="1"/>
</dbReference>
<dbReference type="Gene3D" id="3.60.15.10">
    <property type="entry name" value="Ribonuclease Z/Hydroxyacylglutathione hydrolase-like"/>
    <property type="match status" value="1"/>
</dbReference>
<dbReference type="HAMAP" id="MF_01818">
    <property type="entry name" value="RNase_Z_BN"/>
    <property type="match status" value="1"/>
</dbReference>
<dbReference type="InterPro" id="IPR001279">
    <property type="entry name" value="Metallo-B-lactamas"/>
</dbReference>
<dbReference type="InterPro" id="IPR036866">
    <property type="entry name" value="RibonucZ/Hydroxyglut_hydro"/>
</dbReference>
<dbReference type="InterPro" id="IPR013471">
    <property type="entry name" value="RNase_Z/BN"/>
</dbReference>
<dbReference type="NCBIfam" id="NF000801">
    <property type="entry name" value="PRK00055.1-3"/>
    <property type="match status" value="1"/>
</dbReference>
<dbReference type="NCBIfam" id="TIGR02651">
    <property type="entry name" value="RNase_Z"/>
    <property type="match status" value="1"/>
</dbReference>
<dbReference type="PANTHER" id="PTHR46018">
    <property type="entry name" value="ZINC PHOSPHODIESTERASE ELAC PROTEIN 1"/>
    <property type="match status" value="1"/>
</dbReference>
<dbReference type="PANTHER" id="PTHR46018:SF2">
    <property type="entry name" value="ZINC PHOSPHODIESTERASE ELAC PROTEIN 1"/>
    <property type="match status" value="1"/>
</dbReference>
<dbReference type="Pfam" id="PF00753">
    <property type="entry name" value="Lactamase_B"/>
    <property type="match status" value="1"/>
</dbReference>
<dbReference type="Pfam" id="PF12706">
    <property type="entry name" value="Lactamase_B_2"/>
    <property type="match status" value="1"/>
</dbReference>
<dbReference type="SMART" id="SM00849">
    <property type="entry name" value="Lactamase_B"/>
    <property type="match status" value="1"/>
</dbReference>
<dbReference type="SUPFAM" id="SSF56281">
    <property type="entry name" value="Metallo-hydrolase/oxidoreductase"/>
    <property type="match status" value="1"/>
</dbReference>